<name>ZN721_HUMAN</name>
<comment type="function">
    <text evidence="1">May be involved in transcriptional regulation.</text>
</comment>
<comment type="subcellular location">
    <subcellularLocation>
        <location evidence="4">Nucleus</location>
    </subcellularLocation>
</comment>
<comment type="alternative products">
    <event type="alternative splicing"/>
    <isoform>
        <id>Q8TF20-1</id>
        <name>1</name>
        <sequence type="displayed"/>
    </isoform>
    <isoform>
        <id>Q8TF20-2</id>
        <name>2</name>
        <sequence type="described" ref="VSP_040879"/>
    </isoform>
</comment>
<comment type="similarity">
    <text evidence="4">Belongs to the krueppel C2H2-type zinc-finger protein family.</text>
</comment>
<comment type="sequence caution" evidence="4">
    <conflict type="frameshift">
        <sequence resource="EMBL-CDS" id="CAH10687"/>
    </conflict>
</comment>
<protein>
    <recommendedName>
        <fullName>Zinc finger protein 721</fullName>
    </recommendedName>
</protein>
<sequence>MCSHFTQDFLPVQGIEDSFHKLILRRYEKCGHDNLQLRKGCKSMNVCKVQKGVYNGINKCLSNTQSKIFQCNARVKVFSKFANSNKDKTRHTGEKHFKCNECGKSFQKFSDLTQHKGIHAGEKPYTCEERGKDFGWYTDLNQHKKIHTGEKPYKCEECGKAFNRSTNLTAHKRIHNREKAYTGEDRDRAFGWSTNLNEYKKIHTGDKPYKCKECGKAFMHSSHLNKHEKIHTGEKPYKCKECGKVISSSSSFAKHKRIHTGEKPFKCLECGKAFNISTTLTKHRRIHTGEKPYTCEVCGKAFRQSANLYVHRRIHTGEKPYTCGECGKTFRQSANLYVHRRIHTGEKPYKCEDCGKAFGRYTALNQHKKIHTGEKPYKCEECGKAFNSSTNLTAHKRIHTREKPYTCEDRGRAFGLSTNLNEYKKIHTGDKPYKCKECGKAFIHSLHLNKHEKIHTGKKPYKCKQCGKVITSSSSFAKHKRIHTGEKPFECLECGKAFTSSTTLTKHRRIHTGEKPYTCEVCGKAFRQSAILYVHRRIHTGEKPYTCEECGKTFRQSANLYVHRRIHTGEKPYKCEECGKAFGRYTDLNQHKKIHTGEKLYKCEECGKDFVWYTDLNQQKKIYTGEKPYKCEECGKAFAPSTDLNQHTKILTGEQSYKCEECGKAFGWSIALNQHKKIHTGEKPYKCEECGKAFSRSRNLTTHRRVHTREKPYKCEDRGRSFGWSTNLNEYKKIHTGDKLYKCKECGKVFKQSSHLNRHEKIHTGKKPYKCKECGKVITSSSSFAKHKRIHTGEKPFKCLECGKAFTSSTTLTKHRRIHTGEKPYTCEECGKAFRQSAILYVHRRIHTGEKPYTCGECGKTFRQSANLYAHKKIHTGEKPYTCGDCGKTFRQSANLYAHKKIHTGDKTIQV</sequence>
<keyword id="KW-0025">Alternative splicing</keyword>
<keyword id="KW-0238">DNA-binding</keyword>
<keyword id="KW-1017">Isopeptide bond</keyword>
<keyword id="KW-0479">Metal-binding</keyword>
<keyword id="KW-0539">Nucleus</keyword>
<keyword id="KW-1267">Proteomics identification</keyword>
<keyword id="KW-1185">Reference proteome</keyword>
<keyword id="KW-0677">Repeat</keyword>
<keyword id="KW-0804">Transcription</keyword>
<keyword id="KW-0805">Transcription regulation</keyword>
<keyword id="KW-0832">Ubl conjugation</keyword>
<keyword id="KW-0862">Zinc</keyword>
<keyword id="KW-0863">Zinc-finger</keyword>
<dbReference type="EMBL" id="AL834155">
    <property type="protein sequence ID" value="CAH10687.1"/>
    <property type="status" value="ALT_FRAME"/>
    <property type="molecule type" value="mRNA"/>
</dbReference>
<dbReference type="EMBL" id="AC092574">
    <property type="status" value="NOT_ANNOTATED_CDS"/>
    <property type="molecule type" value="Genomic_DNA"/>
</dbReference>
<dbReference type="EMBL" id="DA309597">
    <property type="status" value="NOT_ANNOTATED_CDS"/>
    <property type="molecule type" value="mRNA"/>
</dbReference>
<dbReference type="EMBL" id="AB075862">
    <property type="protein sequence ID" value="BAB85568.1"/>
    <property type="molecule type" value="mRNA"/>
</dbReference>
<dbReference type="CCDS" id="CCDS46991.1">
    <molecule id="Q8TF20-2"/>
</dbReference>
<dbReference type="RefSeq" id="NP_597731.2">
    <molecule id="Q8TF20-2"/>
    <property type="nucleotide sequence ID" value="NM_133474.4"/>
</dbReference>
<dbReference type="SMR" id="Q8TF20"/>
<dbReference type="BioGRID" id="128095">
    <property type="interactions" value="8"/>
</dbReference>
<dbReference type="FunCoup" id="Q8TF20">
    <property type="interactions" value="334"/>
</dbReference>
<dbReference type="IntAct" id="Q8TF20">
    <property type="interactions" value="6"/>
</dbReference>
<dbReference type="STRING" id="9606.ENSP00000428878"/>
<dbReference type="iPTMnet" id="Q8TF20"/>
<dbReference type="PhosphoSitePlus" id="Q8TF20"/>
<dbReference type="BioMuta" id="ZNF721"/>
<dbReference type="DMDM" id="158706490"/>
<dbReference type="jPOST" id="Q8TF20"/>
<dbReference type="MassIVE" id="Q8TF20"/>
<dbReference type="PaxDb" id="9606-ENSP00000428878"/>
<dbReference type="PeptideAtlas" id="Q8TF20"/>
<dbReference type="ProteomicsDB" id="74540">
    <molecule id="Q8TF20-1"/>
</dbReference>
<dbReference type="ProteomicsDB" id="74541">
    <molecule id="Q8TF20-2"/>
</dbReference>
<dbReference type="Antibodypedia" id="77821">
    <property type="antibodies" value="4 antibodies from 4 providers"/>
</dbReference>
<dbReference type="DNASU" id="170960"/>
<dbReference type="Ensembl" id="ENST00000338977.5">
    <molecule id="Q8TF20-1"/>
    <property type="protein sequence ID" value="ENSP00000340524.5"/>
    <property type="gene ID" value="ENSG00000182903.16"/>
</dbReference>
<dbReference type="Ensembl" id="ENST00000511833.3">
    <molecule id="Q8TF20-2"/>
    <property type="protein sequence ID" value="ENSP00000428878.1"/>
    <property type="gene ID" value="ENSG00000182903.16"/>
</dbReference>
<dbReference type="GeneID" id="170960"/>
<dbReference type="KEGG" id="hsa:170960"/>
<dbReference type="MANE-Select" id="ENST00000511833.3">
    <molecule id="Q8TF20-2"/>
    <property type="protein sequence ID" value="ENSP00000428878.1"/>
    <property type="RefSeq nucleotide sequence ID" value="NM_133474.4"/>
    <property type="RefSeq protein sequence ID" value="NP_597731.2"/>
</dbReference>
<dbReference type="UCSC" id="uc003gag.5">
    <molecule id="Q8TF20-1"/>
    <property type="organism name" value="human"/>
</dbReference>
<dbReference type="AGR" id="HGNC:29425"/>
<dbReference type="CTD" id="170960"/>
<dbReference type="DisGeNET" id="170960"/>
<dbReference type="GeneCards" id="ZNF721"/>
<dbReference type="HGNC" id="HGNC:29425">
    <property type="gene designation" value="ZNF721"/>
</dbReference>
<dbReference type="HPA" id="ENSG00000182903">
    <property type="expression patterns" value="Low tissue specificity"/>
</dbReference>
<dbReference type="neXtProt" id="NX_Q8TF20"/>
<dbReference type="OpenTargets" id="ENSG00000182903"/>
<dbReference type="VEuPathDB" id="HostDB:ENSG00000182903"/>
<dbReference type="eggNOG" id="KOG1721">
    <property type="taxonomic scope" value="Eukaryota"/>
</dbReference>
<dbReference type="GeneTree" id="ENSGT01120000271865"/>
<dbReference type="HOGENOM" id="CLU_002678_17_4_1"/>
<dbReference type="InParanoid" id="Q8TF20"/>
<dbReference type="OMA" id="AFNQHRY"/>
<dbReference type="OrthoDB" id="9411774at2759"/>
<dbReference type="PAN-GO" id="Q8TF20">
    <property type="GO annotations" value="4 GO annotations based on evolutionary models"/>
</dbReference>
<dbReference type="PhylomeDB" id="Q8TF20"/>
<dbReference type="TreeFam" id="TF343410"/>
<dbReference type="PathwayCommons" id="Q8TF20"/>
<dbReference type="Reactome" id="R-HSA-212436">
    <property type="pathway name" value="Generic Transcription Pathway"/>
</dbReference>
<dbReference type="SignaLink" id="Q8TF20"/>
<dbReference type="BioGRID-ORCS" id="170960">
    <property type="hits" value="41 hits in 1154 CRISPR screens"/>
</dbReference>
<dbReference type="ChiTaRS" id="ZNF721">
    <property type="organism name" value="human"/>
</dbReference>
<dbReference type="GenomeRNAi" id="170960"/>
<dbReference type="Pharos" id="Q8TF20">
    <property type="development level" value="Tdark"/>
</dbReference>
<dbReference type="PRO" id="PR:Q8TF20"/>
<dbReference type="Proteomes" id="UP000005640">
    <property type="component" value="Chromosome 4"/>
</dbReference>
<dbReference type="RNAct" id="Q8TF20">
    <property type="molecule type" value="protein"/>
</dbReference>
<dbReference type="Bgee" id="ENSG00000182903">
    <property type="expression patterns" value="Expressed in oocyte and 182 other cell types or tissues"/>
</dbReference>
<dbReference type="ExpressionAtlas" id="Q8TF20">
    <property type="expression patterns" value="baseline and differential"/>
</dbReference>
<dbReference type="GO" id="GO:0005634">
    <property type="term" value="C:nucleus"/>
    <property type="evidence" value="ECO:0000318"/>
    <property type="project" value="GO_Central"/>
</dbReference>
<dbReference type="GO" id="GO:0003677">
    <property type="term" value="F:DNA binding"/>
    <property type="evidence" value="ECO:0007669"/>
    <property type="project" value="UniProtKB-KW"/>
</dbReference>
<dbReference type="GO" id="GO:0008270">
    <property type="term" value="F:zinc ion binding"/>
    <property type="evidence" value="ECO:0007669"/>
    <property type="project" value="UniProtKB-KW"/>
</dbReference>
<dbReference type="GO" id="GO:0006357">
    <property type="term" value="P:regulation of transcription by RNA polymerase II"/>
    <property type="evidence" value="ECO:0000318"/>
    <property type="project" value="GO_Central"/>
</dbReference>
<dbReference type="FunFam" id="3.30.160.60:FF:001747">
    <property type="match status" value="12"/>
</dbReference>
<dbReference type="FunFam" id="3.30.160.60:FF:003078">
    <property type="match status" value="2"/>
</dbReference>
<dbReference type="FunFam" id="3.30.160.60:FF:003763">
    <property type="match status" value="1"/>
</dbReference>
<dbReference type="FunFam" id="3.30.160.60:FF:000446">
    <property type="entry name" value="Zinc finger protein"/>
    <property type="match status" value="1"/>
</dbReference>
<dbReference type="FunFam" id="3.30.160.60:FF:000034">
    <property type="entry name" value="zinc finger protein 25"/>
    <property type="match status" value="1"/>
</dbReference>
<dbReference type="FunFam" id="3.30.160.60:FF:002343">
    <property type="entry name" value="Zinc finger protein 33A"/>
    <property type="match status" value="1"/>
</dbReference>
<dbReference type="FunFam" id="3.30.160.60:FF:000016">
    <property type="entry name" value="zinc finger protein 37 homolog"/>
    <property type="match status" value="2"/>
</dbReference>
<dbReference type="FunFam" id="3.30.160.60:FF:001498">
    <property type="entry name" value="Zinc finger protein 404"/>
    <property type="match status" value="1"/>
</dbReference>
<dbReference type="FunFam" id="3.30.160.60:FF:002090">
    <property type="entry name" value="Zinc finger protein 473"/>
    <property type="match status" value="2"/>
</dbReference>
<dbReference type="FunFam" id="3.30.160.60:FF:001532">
    <property type="entry name" value="Zinc finger protein 483"/>
    <property type="match status" value="1"/>
</dbReference>
<dbReference type="FunFam" id="3.30.160.60:FF:000052">
    <property type="entry name" value="zinc finger protein 546 isoform X1"/>
    <property type="match status" value="2"/>
</dbReference>
<dbReference type="FunFam" id="3.30.160.60:FF:000176">
    <property type="entry name" value="zinc finger protein 70"/>
    <property type="match status" value="1"/>
</dbReference>
<dbReference type="FunFam" id="3.30.160.60:FF:002679">
    <property type="entry name" value="Zinc finger protein 726"/>
    <property type="match status" value="1"/>
</dbReference>
<dbReference type="Gene3D" id="3.30.160.60">
    <property type="entry name" value="Classic Zinc Finger"/>
    <property type="match status" value="28"/>
</dbReference>
<dbReference type="InterPro" id="IPR036236">
    <property type="entry name" value="Znf_C2H2_sf"/>
</dbReference>
<dbReference type="InterPro" id="IPR013087">
    <property type="entry name" value="Znf_C2H2_type"/>
</dbReference>
<dbReference type="PANTHER" id="PTHR23226:SF313">
    <property type="entry name" value="C2H2-TYPE DOMAIN-CONTAINING PROTEIN-RELATED"/>
    <property type="match status" value="1"/>
</dbReference>
<dbReference type="PANTHER" id="PTHR23226">
    <property type="entry name" value="ZINC FINGER AND SCAN DOMAIN-CONTAINING"/>
    <property type="match status" value="1"/>
</dbReference>
<dbReference type="Pfam" id="PF00096">
    <property type="entry name" value="zf-C2H2"/>
    <property type="match status" value="19"/>
</dbReference>
<dbReference type="Pfam" id="PF13912">
    <property type="entry name" value="zf-C2H2_6"/>
    <property type="match status" value="3"/>
</dbReference>
<dbReference type="Pfam" id="PF13465">
    <property type="entry name" value="zf-H2C2_2"/>
    <property type="match status" value="1"/>
</dbReference>
<dbReference type="SMART" id="SM00355">
    <property type="entry name" value="ZnF_C2H2"/>
    <property type="match status" value="25"/>
</dbReference>
<dbReference type="SUPFAM" id="SSF57667">
    <property type="entry name" value="beta-beta-alpha zinc fingers"/>
    <property type="match status" value="15"/>
</dbReference>
<dbReference type="PROSITE" id="PS00028">
    <property type="entry name" value="ZINC_FINGER_C2H2_1"/>
    <property type="match status" value="23"/>
</dbReference>
<dbReference type="PROSITE" id="PS50157">
    <property type="entry name" value="ZINC_FINGER_C2H2_2"/>
    <property type="match status" value="28"/>
</dbReference>
<feature type="chain" id="PRO_0000306879" description="Zinc finger protein 721">
    <location>
        <begin position="1"/>
        <end position="911"/>
    </location>
</feature>
<feature type="zinc finger region" description="C2H2-type 1; degenerate" evidence="2">
    <location>
        <begin position="69"/>
        <end position="91"/>
    </location>
</feature>
<feature type="zinc finger region" description="C2H2-type 2" evidence="2">
    <location>
        <begin position="97"/>
        <end position="119"/>
    </location>
</feature>
<feature type="zinc finger region" description="C2H2-type 3; degenerate" evidence="2">
    <location>
        <begin position="125"/>
        <end position="147"/>
    </location>
</feature>
<feature type="zinc finger region" description="C2H2-type 4" evidence="2">
    <location>
        <begin position="153"/>
        <end position="175"/>
    </location>
</feature>
<feature type="zinc finger region" description="C2H2-type 5; degenerate" evidence="2">
    <location>
        <begin position="181"/>
        <end position="203"/>
    </location>
</feature>
<feature type="zinc finger region" description="C2H2-type 6" evidence="2">
    <location>
        <begin position="209"/>
        <end position="231"/>
    </location>
</feature>
<feature type="zinc finger region" description="C2H2-type 7" evidence="2">
    <location>
        <begin position="237"/>
        <end position="259"/>
    </location>
</feature>
<feature type="zinc finger region" description="C2H2-type 8" evidence="2">
    <location>
        <begin position="265"/>
        <end position="287"/>
    </location>
</feature>
<feature type="zinc finger region" description="C2H2-type 9" evidence="2">
    <location>
        <begin position="293"/>
        <end position="315"/>
    </location>
</feature>
<feature type="zinc finger region" description="C2H2-type 10" evidence="2">
    <location>
        <begin position="321"/>
        <end position="343"/>
    </location>
</feature>
<feature type="zinc finger region" description="C2H2-type 11" evidence="2">
    <location>
        <begin position="349"/>
        <end position="371"/>
    </location>
</feature>
<feature type="zinc finger region" description="C2H2-type 12" evidence="2">
    <location>
        <begin position="377"/>
        <end position="399"/>
    </location>
</feature>
<feature type="zinc finger region" description="C2H2-type 13; degenerate" evidence="2">
    <location>
        <begin position="405"/>
        <end position="427"/>
    </location>
</feature>
<feature type="zinc finger region" description="C2H2-type 14" evidence="2">
    <location>
        <begin position="433"/>
        <end position="455"/>
    </location>
</feature>
<feature type="zinc finger region" description="C2H2-type 15" evidence="2">
    <location>
        <begin position="461"/>
        <end position="483"/>
    </location>
</feature>
<feature type="zinc finger region" description="C2H2-type 16" evidence="2">
    <location>
        <begin position="489"/>
        <end position="511"/>
    </location>
</feature>
<feature type="zinc finger region" description="C2H2-type 17" evidence="2">
    <location>
        <begin position="517"/>
        <end position="539"/>
    </location>
</feature>
<feature type="zinc finger region" description="C2H2-type 18" evidence="2">
    <location>
        <begin position="545"/>
        <end position="567"/>
    </location>
</feature>
<feature type="zinc finger region" description="C2H2-type 19" evidence="2">
    <location>
        <begin position="573"/>
        <end position="595"/>
    </location>
</feature>
<feature type="zinc finger region" description="C2H2-type 20; degenerate" evidence="2">
    <location>
        <begin position="601"/>
        <end position="623"/>
    </location>
</feature>
<feature type="zinc finger region" description="C2H2-type 21; degenerate" evidence="2">
    <location>
        <begin position="629"/>
        <end position="651"/>
    </location>
</feature>
<feature type="zinc finger region" description="C2H2-type 22" evidence="2">
    <location>
        <begin position="657"/>
        <end position="679"/>
    </location>
</feature>
<feature type="zinc finger region" description="C2H2-type 23" evidence="2">
    <location>
        <begin position="685"/>
        <end position="707"/>
    </location>
</feature>
<feature type="zinc finger region" description="C2H2-type 24; degenerate" evidence="2">
    <location>
        <begin position="713"/>
        <end position="735"/>
    </location>
</feature>
<feature type="zinc finger region" description="C2H2-type 25" evidence="2">
    <location>
        <begin position="741"/>
        <end position="763"/>
    </location>
</feature>
<feature type="zinc finger region" description="C2H2-type 26" evidence="2">
    <location>
        <begin position="769"/>
        <end position="791"/>
    </location>
</feature>
<feature type="zinc finger region" description="C2H2-type 27" evidence="2">
    <location>
        <begin position="797"/>
        <end position="819"/>
    </location>
</feature>
<feature type="zinc finger region" description="C2H2-type 28" evidence="2">
    <location>
        <begin position="825"/>
        <end position="847"/>
    </location>
</feature>
<feature type="zinc finger region" description="C2H2-type 29" evidence="2">
    <location>
        <begin position="853"/>
        <end position="875"/>
    </location>
</feature>
<feature type="zinc finger region" description="C2H2-type 30" evidence="2">
    <location>
        <begin position="881"/>
        <end position="903"/>
    </location>
</feature>
<feature type="cross-link" description="Glycyl lysine isopeptide (Lys-Gly) (interchain with G-Cter in SUMO2)" evidence="5">
    <location>
        <position position="478"/>
    </location>
</feature>
<feature type="cross-link" description="Glycyl lysine isopeptide (Lys-Gly) (interchain with G-Cter in SUMO2)" evidence="5">
    <location>
        <position position="649"/>
    </location>
</feature>
<feature type="cross-link" description="Glycyl lysine isopeptide (Lys-Gly) (interchain with G-Cter in SUMO2)" evidence="5">
    <location>
        <position position="786"/>
    </location>
</feature>
<feature type="splice variant" id="VSP_040879" description="In isoform 2." evidence="3">
    <original>M</original>
    <variation>MLENYRNLVSLAM</variation>
    <location>
        <position position="1"/>
    </location>
</feature>
<feature type="sequence conflict" description="In Ref. 1; CAH10687." evidence="4" ref="1">
    <original>K</original>
    <variation>T</variation>
    <location>
        <position position="210"/>
    </location>
</feature>
<feature type="sequence conflict" description="In Ref. 1; CAH10687." evidence="4" ref="1">
    <original>SSS</original>
    <variation>LIL</variation>
    <location>
        <begin position="247"/>
        <end position="249"/>
    </location>
</feature>
<feature type="sequence conflict" description="In Ref. 1; CAH10687." evidence="4" ref="1">
    <original>N</original>
    <variation>I</variation>
    <location>
        <position position="307"/>
    </location>
</feature>
<feature type="sequence conflict" description="In Ref. 1; CAH10687." evidence="4" ref="1">
    <original>G</original>
    <variation>E</variation>
    <location>
        <position position="324"/>
    </location>
</feature>
<feature type="sequence conflict" description="In Ref. 1; CAH10687." evidence="4" ref="1">
    <original>A</original>
    <variation>D</variation>
    <location>
        <position position="363"/>
    </location>
</feature>
<feature type="sequence conflict" description="In Ref. 1; CAH10687." evidence="4" ref="1">
    <original>NS</original>
    <variation>VC</variation>
    <location>
        <begin position="387"/>
        <end position="388"/>
    </location>
</feature>
<feature type="sequence conflict" description="In Ref. 1; CAH10687." evidence="4" ref="1">
    <original>N</original>
    <variation>D</variation>
    <location>
        <position position="391"/>
    </location>
</feature>
<feature type="sequence conflict" description="In Ref. 1; CAH10687." evidence="4" ref="1">
    <original>H</original>
    <variation>M</variation>
    <location>
        <position position="395"/>
    </location>
</feature>
<feature type="sequence conflict" description="In Ref. 1; CAH10687." evidence="4" ref="1">
    <original>R</original>
    <variation>C</variation>
    <location>
        <position position="410"/>
    </location>
</feature>
<feature type="sequence conflict" description="In Ref. 1; CAH10687." evidence="4" ref="1">
    <original>L</original>
    <variation>M</variation>
    <location>
        <position position="416"/>
    </location>
</feature>
<feature type="sequence conflict" description="In Ref. 1; CAH10687." evidence="4" ref="1">
    <original>H</original>
    <variation>HS</variation>
    <location>
        <position position="444"/>
    </location>
</feature>
<feature type="sequence conflict" description="In Ref. 1; CAH10687." evidence="4" ref="1">
    <original>Q</original>
    <variation>E</variation>
    <location>
        <position position="465"/>
    </location>
</feature>
<organism>
    <name type="scientific">Homo sapiens</name>
    <name type="common">Human</name>
    <dbReference type="NCBI Taxonomy" id="9606"/>
    <lineage>
        <taxon>Eukaryota</taxon>
        <taxon>Metazoa</taxon>
        <taxon>Chordata</taxon>
        <taxon>Craniata</taxon>
        <taxon>Vertebrata</taxon>
        <taxon>Euteleostomi</taxon>
        <taxon>Mammalia</taxon>
        <taxon>Eutheria</taxon>
        <taxon>Euarchontoglires</taxon>
        <taxon>Primates</taxon>
        <taxon>Haplorrhini</taxon>
        <taxon>Catarrhini</taxon>
        <taxon>Hominidae</taxon>
        <taxon>Homo</taxon>
    </lineage>
</organism>
<evidence type="ECO:0000250" key="1"/>
<evidence type="ECO:0000255" key="2">
    <source>
        <dbReference type="PROSITE-ProRule" id="PRU00042"/>
    </source>
</evidence>
<evidence type="ECO:0000303" key="3">
    <source>
    </source>
</evidence>
<evidence type="ECO:0000305" key="4"/>
<evidence type="ECO:0007744" key="5">
    <source>
    </source>
</evidence>
<gene>
    <name type="primary">ZNF721</name>
    <name type="synonym">KIAA1982</name>
</gene>
<accession>Q8TF20</accession>
<accession>Q69YG7</accession>
<proteinExistence type="evidence at protein level"/>
<reference key="1">
    <citation type="journal article" date="2007" name="BMC Genomics">
        <title>The full-ORF clone resource of the German cDNA consortium.</title>
        <authorList>
            <person name="Bechtel S."/>
            <person name="Rosenfelder H."/>
            <person name="Duda A."/>
            <person name="Schmidt C.P."/>
            <person name="Ernst U."/>
            <person name="Wellenreuther R."/>
            <person name="Mehrle A."/>
            <person name="Schuster C."/>
            <person name="Bahr A."/>
            <person name="Bloecker H."/>
            <person name="Heubner D."/>
            <person name="Hoerlein A."/>
            <person name="Michel G."/>
            <person name="Wedler H."/>
            <person name="Koehrer K."/>
            <person name="Ottenwaelder B."/>
            <person name="Poustka A."/>
            <person name="Wiemann S."/>
            <person name="Schupp I."/>
        </authorList>
    </citation>
    <scope>NUCLEOTIDE SEQUENCE [LARGE SCALE MRNA] (ISOFORM 1)</scope>
    <source>
        <tissue>Amygdala</tissue>
    </source>
</reference>
<reference key="2">
    <citation type="journal article" date="2005" name="Nature">
        <title>Generation and annotation of the DNA sequences of human chromosomes 2 and 4.</title>
        <authorList>
            <person name="Hillier L.W."/>
            <person name="Graves T.A."/>
            <person name="Fulton R.S."/>
            <person name="Fulton L.A."/>
            <person name="Pepin K.H."/>
            <person name="Minx P."/>
            <person name="Wagner-McPherson C."/>
            <person name="Layman D."/>
            <person name="Wylie K."/>
            <person name="Sekhon M."/>
            <person name="Becker M.C."/>
            <person name="Fewell G.A."/>
            <person name="Delehaunty K.D."/>
            <person name="Miner T.L."/>
            <person name="Nash W.E."/>
            <person name="Kremitzki C."/>
            <person name="Oddy L."/>
            <person name="Du H."/>
            <person name="Sun H."/>
            <person name="Bradshaw-Cordum H."/>
            <person name="Ali J."/>
            <person name="Carter J."/>
            <person name="Cordes M."/>
            <person name="Harris A."/>
            <person name="Isak A."/>
            <person name="van Brunt A."/>
            <person name="Nguyen C."/>
            <person name="Du F."/>
            <person name="Courtney L."/>
            <person name="Kalicki J."/>
            <person name="Ozersky P."/>
            <person name="Abbott S."/>
            <person name="Armstrong J."/>
            <person name="Belter E.A."/>
            <person name="Caruso L."/>
            <person name="Cedroni M."/>
            <person name="Cotton M."/>
            <person name="Davidson T."/>
            <person name="Desai A."/>
            <person name="Elliott G."/>
            <person name="Erb T."/>
            <person name="Fronick C."/>
            <person name="Gaige T."/>
            <person name="Haakenson W."/>
            <person name="Haglund K."/>
            <person name="Holmes A."/>
            <person name="Harkins R."/>
            <person name="Kim K."/>
            <person name="Kruchowski S.S."/>
            <person name="Strong C.M."/>
            <person name="Grewal N."/>
            <person name="Goyea E."/>
            <person name="Hou S."/>
            <person name="Levy A."/>
            <person name="Martinka S."/>
            <person name="Mead K."/>
            <person name="McLellan M.D."/>
            <person name="Meyer R."/>
            <person name="Randall-Maher J."/>
            <person name="Tomlinson C."/>
            <person name="Dauphin-Kohlberg S."/>
            <person name="Kozlowicz-Reilly A."/>
            <person name="Shah N."/>
            <person name="Swearengen-Shahid S."/>
            <person name="Snider J."/>
            <person name="Strong J.T."/>
            <person name="Thompson J."/>
            <person name="Yoakum M."/>
            <person name="Leonard S."/>
            <person name="Pearman C."/>
            <person name="Trani L."/>
            <person name="Radionenko M."/>
            <person name="Waligorski J.E."/>
            <person name="Wang C."/>
            <person name="Rock S.M."/>
            <person name="Tin-Wollam A.-M."/>
            <person name="Maupin R."/>
            <person name="Latreille P."/>
            <person name="Wendl M.C."/>
            <person name="Yang S.-P."/>
            <person name="Pohl C."/>
            <person name="Wallis J.W."/>
            <person name="Spieth J."/>
            <person name="Bieri T.A."/>
            <person name="Berkowicz N."/>
            <person name="Nelson J.O."/>
            <person name="Osborne J."/>
            <person name="Ding L."/>
            <person name="Meyer R."/>
            <person name="Sabo A."/>
            <person name="Shotland Y."/>
            <person name="Sinha P."/>
            <person name="Wohldmann P.E."/>
            <person name="Cook L.L."/>
            <person name="Hickenbotham M.T."/>
            <person name="Eldred J."/>
            <person name="Williams D."/>
            <person name="Jones T.A."/>
            <person name="She X."/>
            <person name="Ciccarelli F.D."/>
            <person name="Izaurralde E."/>
            <person name="Taylor J."/>
            <person name="Schmutz J."/>
            <person name="Myers R.M."/>
            <person name="Cox D.R."/>
            <person name="Huang X."/>
            <person name="McPherson J.D."/>
            <person name="Mardis E.R."/>
            <person name="Clifton S.W."/>
            <person name="Warren W.C."/>
            <person name="Chinwalla A.T."/>
            <person name="Eddy S.R."/>
            <person name="Marra M.A."/>
            <person name="Ovcharenko I."/>
            <person name="Furey T.S."/>
            <person name="Miller W."/>
            <person name="Eichler E.E."/>
            <person name="Bork P."/>
            <person name="Suyama M."/>
            <person name="Torrents D."/>
            <person name="Waterston R.H."/>
            <person name="Wilson R.K."/>
        </authorList>
    </citation>
    <scope>NUCLEOTIDE SEQUENCE [LARGE SCALE GENOMIC DNA]</scope>
</reference>
<reference key="3">
    <citation type="journal article" date="2004" name="Nat. Genet.">
        <title>Complete sequencing and characterization of 21,243 full-length human cDNAs.</title>
        <authorList>
            <person name="Ota T."/>
            <person name="Suzuki Y."/>
            <person name="Nishikawa T."/>
            <person name="Otsuki T."/>
            <person name="Sugiyama T."/>
            <person name="Irie R."/>
            <person name="Wakamatsu A."/>
            <person name="Hayashi K."/>
            <person name="Sato H."/>
            <person name="Nagai K."/>
            <person name="Kimura K."/>
            <person name="Makita H."/>
            <person name="Sekine M."/>
            <person name="Obayashi M."/>
            <person name="Nishi T."/>
            <person name="Shibahara T."/>
            <person name="Tanaka T."/>
            <person name="Ishii S."/>
            <person name="Yamamoto J."/>
            <person name="Saito K."/>
            <person name="Kawai Y."/>
            <person name="Isono Y."/>
            <person name="Nakamura Y."/>
            <person name="Nagahari K."/>
            <person name="Murakami K."/>
            <person name="Yasuda T."/>
            <person name="Iwayanagi T."/>
            <person name="Wagatsuma M."/>
            <person name="Shiratori A."/>
            <person name="Sudo H."/>
            <person name="Hosoiri T."/>
            <person name="Kaku Y."/>
            <person name="Kodaira H."/>
            <person name="Kondo H."/>
            <person name="Sugawara M."/>
            <person name="Takahashi M."/>
            <person name="Kanda K."/>
            <person name="Yokoi T."/>
            <person name="Furuya T."/>
            <person name="Kikkawa E."/>
            <person name="Omura Y."/>
            <person name="Abe K."/>
            <person name="Kamihara K."/>
            <person name="Katsuta N."/>
            <person name="Sato K."/>
            <person name="Tanikawa M."/>
            <person name="Yamazaki M."/>
            <person name="Ninomiya K."/>
            <person name="Ishibashi T."/>
            <person name="Yamashita H."/>
            <person name="Murakawa K."/>
            <person name="Fujimori K."/>
            <person name="Tanai H."/>
            <person name="Kimata M."/>
            <person name="Watanabe M."/>
            <person name="Hiraoka S."/>
            <person name="Chiba Y."/>
            <person name="Ishida S."/>
            <person name="Ono Y."/>
            <person name="Takiguchi S."/>
            <person name="Watanabe S."/>
            <person name="Yosida M."/>
            <person name="Hotuta T."/>
            <person name="Kusano J."/>
            <person name="Kanehori K."/>
            <person name="Takahashi-Fujii A."/>
            <person name="Hara H."/>
            <person name="Tanase T.-O."/>
            <person name="Nomura Y."/>
            <person name="Togiya S."/>
            <person name="Komai F."/>
            <person name="Hara R."/>
            <person name="Takeuchi K."/>
            <person name="Arita M."/>
            <person name="Imose N."/>
            <person name="Musashino K."/>
            <person name="Yuuki H."/>
            <person name="Oshima A."/>
            <person name="Sasaki N."/>
            <person name="Aotsuka S."/>
            <person name="Yoshikawa Y."/>
            <person name="Matsunawa H."/>
            <person name="Ichihara T."/>
            <person name="Shiohata N."/>
            <person name="Sano S."/>
            <person name="Moriya S."/>
            <person name="Momiyama H."/>
            <person name="Satoh N."/>
            <person name="Takami S."/>
            <person name="Terashima Y."/>
            <person name="Suzuki O."/>
            <person name="Nakagawa S."/>
            <person name="Senoh A."/>
            <person name="Mizoguchi H."/>
            <person name="Goto Y."/>
            <person name="Shimizu F."/>
            <person name="Wakebe H."/>
            <person name="Hishigaki H."/>
            <person name="Watanabe T."/>
            <person name="Sugiyama A."/>
            <person name="Takemoto M."/>
            <person name="Kawakami B."/>
            <person name="Yamazaki M."/>
            <person name="Watanabe K."/>
            <person name="Kumagai A."/>
            <person name="Itakura S."/>
            <person name="Fukuzumi Y."/>
            <person name="Fujimori Y."/>
            <person name="Komiyama M."/>
            <person name="Tashiro H."/>
            <person name="Tanigami A."/>
            <person name="Fujiwara T."/>
            <person name="Ono T."/>
            <person name="Yamada K."/>
            <person name="Fujii Y."/>
            <person name="Ozaki K."/>
            <person name="Hirao M."/>
            <person name="Ohmori Y."/>
            <person name="Kawabata A."/>
            <person name="Hikiji T."/>
            <person name="Kobatake N."/>
            <person name="Inagaki H."/>
            <person name="Ikema Y."/>
            <person name="Okamoto S."/>
            <person name="Okitani R."/>
            <person name="Kawakami T."/>
            <person name="Noguchi S."/>
            <person name="Itoh T."/>
            <person name="Shigeta K."/>
            <person name="Senba T."/>
            <person name="Matsumura K."/>
            <person name="Nakajima Y."/>
            <person name="Mizuno T."/>
            <person name="Morinaga M."/>
            <person name="Sasaki M."/>
            <person name="Togashi T."/>
            <person name="Oyama M."/>
            <person name="Hata H."/>
            <person name="Watanabe M."/>
            <person name="Komatsu T."/>
            <person name="Mizushima-Sugano J."/>
            <person name="Satoh T."/>
            <person name="Shirai Y."/>
            <person name="Takahashi Y."/>
            <person name="Nakagawa K."/>
            <person name="Okumura K."/>
            <person name="Nagase T."/>
            <person name="Nomura N."/>
            <person name="Kikuchi H."/>
            <person name="Masuho Y."/>
            <person name="Yamashita R."/>
            <person name="Nakai K."/>
            <person name="Yada T."/>
            <person name="Nakamura Y."/>
            <person name="Ohara O."/>
            <person name="Isogai T."/>
            <person name="Sugano S."/>
        </authorList>
    </citation>
    <scope>NUCLEOTIDE SEQUENCE [LARGE SCALE MRNA] OF 1-123 (ISOFORM 2)</scope>
</reference>
<reference key="4">
    <citation type="journal article" date="2001" name="DNA Res.">
        <title>Prediction of the coding sequences of unidentified human genes. XXII. The complete sequences of 50 new cDNA clones which code for large proteins.</title>
        <authorList>
            <person name="Nagase T."/>
            <person name="Kikuno R."/>
            <person name="Ohara O."/>
        </authorList>
    </citation>
    <scope>NUCLEOTIDE SEQUENCE [LARGE SCALE MRNA] OF 313-911</scope>
    <source>
        <tissue>Brain</tissue>
    </source>
</reference>
<reference key="5">
    <citation type="journal article" date="2017" name="Nat. Struct. Mol. Biol.">
        <title>Site-specific mapping of the human SUMO proteome reveals co-modification with phosphorylation.</title>
        <authorList>
            <person name="Hendriks I.A."/>
            <person name="Lyon D."/>
            <person name="Young C."/>
            <person name="Jensen L.J."/>
            <person name="Vertegaal A.C."/>
            <person name="Nielsen M.L."/>
        </authorList>
    </citation>
    <scope>SUMOYLATION [LARGE SCALE ANALYSIS] AT LYS-478; LYS-649 AND LYS-786</scope>
    <scope>IDENTIFICATION BY MASS SPECTROMETRY [LARGE SCALE ANALYSIS]</scope>
</reference>